<name>RL30_POLAQ</name>
<reference key="1">
    <citation type="journal article" date="2012" name="Stand. Genomic Sci.">
        <title>Complete genome sequence of Polynucleobacter necessarius subsp. asymbioticus type strain (QLW-P1DMWA-1(T)).</title>
        <authorList>
            <person name="Meincke L."/>
            <person name="Copeland A."/>
            <person name="Lapidus A."/>
            <person name="Lucas S."/>
            <person name="Berry K.W."/>
            <person name="Del Rio T.G."/>
            <person name="Hammon N."/>
            <person name="Dalin E."/>
            <person name="Tice H."/>
            <person name="Pitluck S."/>
            <person name="Richardson P."/>
            <person name="Bruce D."/>
            <person name="Goodwin L."/>
            <person name="Han C."/>
            <person name="Tapia R."/>
            <person name="Detter J.C."/>
            <person name="Schmutz J."/>
            <person name="Brettin T."/>
            <person name="Larimer F."/>
            <person name="Land M."/>
            <person name="Hauser L."/>
            <person name="Kyrpides N.C."/>
            <person name="Ivanova N."/>
            <person name="Goker M."/>
            <person name="Woyke T."/>
            <person name="Wu Q.L."/>
            <person name="Pockl M."/>
            <person name="Hahn M.W."/>
            <person name="Klenk H.P."/>
        </authorList>
    </citation>
    <scope>NUCLEOTIDE SEQUENCE [LARGE SCALE GENOMIC DNA]</scope>
    <source>
        <strain>DSM 18221 / CIP 109841 / QLW-P1DMWA-1</strain>
    </source>
</reference>
<sequence length="62" mass="6752">MTTSNTKVKLQLVRSLIGTRESHRATVRGLGLGRINSVSELEDTPAVRGMINKVSYLVKVIG</sequence>
<comment type="subunit">
    <text evidence="1">Part of the 50S ribosomal subunit.</text>
</comment>
<comment type="similarity">
    <text evidence="1">Belongs to the universal ribosomal protein uL30 family.</text>
</comment>
<dbReference type="EMBL" id="CP000655">
    <property type="protein sequence ID" value="ABP33293.1"/>
    <property type="molecule type" value="Genomic_DNA"/>
</dbReference>
<dbReference type="RefSeq" id="WP_011901918.1">
    <property type="nucleotide sequence ID" value="NC_009379.1"/>
</dbReference>
<dbReference type="SMR" id="A4SUX9"/>
<dbReference type="GeneID" id="31480417"/>
<dbReference type="KEGG" id="pnu:Pnuc_0071"/>
<dbReference type="eggNOG" id="COG1841">
    <property type="taxonomic scope" value="Bacteria"/>
</dbReference>
<dbReference type="HOGENOM" id="CLU_131047_1_4_4"/>
<dbReference type="Proteomes" id="UP000000231">
    <property type="component" value="Chromosome"/>
</dbReference>
<dbReference type="GO" id="GO:0022625">
    <property type="term" value="C:cytosolic large ribosomal subunit"/>
    <property type="evidence" value="ECO:0007669"/>
    <property type="project" value="TreeGrafter"/>
</dbReference>
<dbReference type="GO" id="GO:0003735">
    <property type="term" value="F:structural constituent of ribosome"/>
    <property type="evidence" value="ECO:0007669"/>
    <property type="project" value="InterPro"/>
</dbReference>
<dbReference type="GO" id="GO:0006412">
    <property type="term" value="P:translation"/>
    <property type="evidence" value="ECO:0007669"/>
    <property type="project" value="UniProtKB-UniRule"/>
</dbReference>
<dbReference type="CDD" id="cd01658">
    <property type="entry name" value="Ribosomal_L30"/>
    <property type="match status" value="1"/>
</dbReference>
<dbReference type="FunFam" id="3.30.1390.20:FF:000001">
    <property type="entry name" value="50S ribosomal protein L30"/>
    <property type="match status" value="1"/>
</dbReference>
<dbReference type="Gene3D" id="3.30.1390.20">
    <property type="entry name" value="Ribosomal protein L30, ferredoxin-like fold domain"/>
    <property type="match status" value="1"/>
</dbReference>
<dbReference type="HAMAP" id="MF_01371_B">
    <property type="entry name" value="Ribosomal_uL30_B"/>
    <property type="match status" value="1"/>
</dbReference>
<dbReference type="InterPro" id="IPR036919">
    <property type="entry name" value="Ribo_uL30_ferredoxin-like_sf"/>
</dbReference>
<dbReference type="InterPro" id="IPR005996">
    <property type="entry name" value="Ribosomal_uL30_bac-type"/>
</dbReference>
<dbReference type="InterPro" id="IPR016082">
    <property type="entry name" value="Ribosomal_uL30_ferredoxin-like"/>
</dbReference>
<dbReference type="NCBIfam" id="TIGR01308">
    <property type="entry name" value="rpmD_bact"/>
    <property type="match status" value="1"/>
</dbReference>
<dbReference type="PANTHER" id="PTHR15892:SF2">
    <property type="entry name" value="LARGE RIBOSOMAL SUBUNIT PROTEIN UL30M"/>
    <property type="match status" value="1"/>
</dbReference>
<dbReference type="PANTHER" id="PTHR15892">
    <property type="entry name" value="MITOCHONDRIAL RIBOSOMAL PROTEIN L30"/>
    <property type="match status" value="1"/>
</dbReference>
<dbReference type="Pfam" id="PF00327">
    <property type="entry name" value="Ribosomal_L30"/>
    <property type="match status" value="1"/>
</dbReference>
<dbReference type="PIRSF" id="PIRSF002211">
    <property type="entry name" value="Ribosomal_L30_bac-type"/>
    <property type="match status" value="1"/>
</dbReference>
<dbReference type="SUPFAM" id="SSF55129">
    <property type="entry name" value="Ribosomal protein L30p/L7e"/>
    <property type="match status" value="1"/>
</dbReference>
<protein>
    <recommendedName>
        <fullName evidence="1">Large ribosomal subunit protein uL30</fullName>
    </recommendedName>
    <alternativeName>
        <fullName evidence="2">50S ribosomal protein L30</fullName>
    </alternativeName>
</protein>
<accession>A4SUX9</accession>
<feature type="chain" id="PRO_0000347129" description="Large ribosomal subunit protein uL30">
    <location>
        <begin position="1"/>
        <end position="62"/>
    </location>
</feature>
<gene>
    <name evidence="1" type="primary">rpmD</name>
    <name type="ordered locus">Pnuc_0071</name>
</gene>
<organism>
    <name type="scientific">Polynucleobacter asymbioticus (strain DSM 18221 / CIP 109841 / QLW-P1DMWA-1)</name>
    <name type="common">Polynucleobacter necessarius subsp. asymbioticus</name>
    <dbReference type="NCBI Taxonomy" id="312153"/>
    <lineage>
        <taxon>Bacteria</taxon>
        <taxon>Pseudomonadati</taxon>
        <taxon>Pseudomonadota</taxon>
        <taxon>Betaproteobacteria</taxon>
        <taxon>Burkholderiales</taxon>
        <taxon>Burkholderiaceae</taxon>
        <taxon>Polynucleobacter</taxon>
    </lineage>
</organism>
<evidence type="ECO:0000255" key="1">
    <source>
        <dbReference type="HAMAP-Rule" id="MF_01371"/>
    </source>
</evidence>
<evidence type="ECO:0000305" key="2"/>
<proteinExistence type="inferred from homology"/>
<keyword id="KW-1185">Reference proteome</keyword>
<keyword id="KW-0687">Ribonucleoprotein</keyword>
<keyword id="KW-0689">Ribosomal protein</keyword>